<geneLocation type="chloroplast"/>
<comment type="function">
    <text evidence="1">One of the components of the core complex of photosystem II (PSII). It binds chlorophyll and helps catalyze the primary light-induced photochemical processes of PSII. PSII is a light-driven water:plastoquinone oxidoreductase, using light energy to abstract electrons from H(2)O, generating O(2) and a proton gradient subsequently used for ATP formation.</text>
</comment>
<comment type="cofactor">
    <text evidence="1">Binds multiple chlorophylls and provides some of the ligands for the Ca-4Mn-5O cluster of the oxygen-evolving complex. It may also provide a ligand for a Cl- that is required for oxygen evolution. PSII binds additional chlorophylls, carotenoids and specific lipids.</text>
</comment>
<comment type="subunit">
    <text evidence="1">PSII is composed of 1 copy each of membrane proteins PsbA, PsbB, PsbC, PsbD, PsbE, PsbF, PsbH, PsbI, PsbJ, PsbK, PsbL, PsbM, PsbT, PsbX, PsbY, PsbZ, Psb30/Ycf12, at least 3 peripheral proteins of the oxygen-evolving complex and a large number of cofactors. It forms dimeric complexes.</text>
</comment>
<comment type="subcellular location">
    <subcellularLocation>
        <location evidence="1">Plastid</location>
        <location evidence="1">Chloroplast thylakoid membrane</location>
        <topology evidence="1">Multi-pass membrane protein</topology>
    </subcellularLocation>
</comment>
<comment type="similarity">
    <text evidence="1">Belongs to the PsbB/PsbC family. PsbC subfamily.</text>
</comment>
<accession>Q6YXN9</accession>
<reference key="1">
    <citation type="journal article" date="2003" name="Nucleic Acids Res.">
        <title>Complete chloroplast DNA sequence of the moss Physcomitrella patens: evidence for the loss and relocation of rpoA from the chloroplast to the nucleus.</title>
        <authorList>
            <person name="Sugiura C."/>
            <person name="Kobayashi Y."/>
            <person name="Setsuyuki A."/>
            <person name="Sugita C."/>
            <person name="Sugita M."/>
        </authorList>
    </citation>
    <scope>NUCLEOTIDE SEQUENCE [LARGE SCALE GENOMIC DNA]</scope>
    <source>
        <strain>cv. Gransden 2004</strain>
    </source>
</reference>
<protein>
    <recommendedName>
        <fullName evidence="1">Photosystem II CP43 reaction center protein</fullName>
    </recommendedName>
    <alternativeName>
        <fullName evidence="1">PSII 43 kDa protein</fullName>
    </alternativeName>
    <alternativeName>
        <fullName evidence="1">Protein CP-43</fullName>
    </alternativeName>
</protein>
<gene>
    <name evidence="1" type="primary">psbC</name>
</gene>
<sequence>MKILYSQRRFYHVETLFNGTLALSGRDQETTGFAWWAGNARLINLSGKLLGAHVAHAGLIVFWAGAMNLFEVAHFVPEKPMYEQGLILLPHLATLGWGVGPGGEVIDTFPYFVSGVLHLISSAVLGFGGIYHALIGPETLEESFPFFGYVWKDKNKMTTILGIHLILLGAGAFLLVFKALYFGGIYDTWAPGGGDVRKITNLTLSPGVIFGYLLKSPFGGEGWIVSVDNLEDIIGGHVWLGSICIFGGIWHILTKPFAWARRALVWSGEAYLSYSLGAIAVFGFIACCFVWFNNTAYPSEFYGPTGPEASQAQAFTFLVRDQRLGANVGSAQGPTGLGKYLMRSPTGEIIFGGETMRFWDLRAPWLEPLRGPNGLDLSKLKKDIQPWQERRSAEYMTHAPLGSLNSVGGVATEINAVNYVSPRSWLATSHFVLGFFFFVGHLWHAGRARAAAAGFEKGIDRDFEPVLSMTPLN</sequence>
<keyword id="KW-0007">Acetylation</keyword>
<keyword id="KW-0148">Chlorophyll</keyword>
<keyword id="KW-0150">Chloroplast</keyword>
<keyword id="KW-0157">Chromophore</keyword>
<keyword id="KW-0464">Manganese</keyword>
<keyword id="KW-0472">Membrane</keyword>
<keyword id="KW-0479">Metal-binding</keyword>
<keyword id="KW-0597">Phosphoprotein</keyword>
<keyword id="KW-0602">Photosynthesis</keyword>
<keyword id="KW-0604">Photosystem II</keyword>
<keyword id="KW-0934">Plastid</keyword>
<keyword id="KW-1185">Reference proteome</keyword>
<keyword id="KW-0793">Thylakoid</keyword>
<keyword id="KW-0812">Transmembrane</keyword>
<keyword id="KW-1133">Transmembrane helix</keyword>
<organism>
    <name type="scientific">Physcomitrium patens</name>
    <name type="common">Spreading-leaved earth moss</name>
    <name type="synonym">Physcomitrella patens</name>
    <dbReference type="NCBI Taxonomy" id="3218"/>
    <lineage>
        <taxon>Eukaryota</taxon>
        <taxon>Viridiplantae</taxon>
        <taxon>Streptophyta</taxon>
        <taxon>Embryophyta</taxon>
        <taxon>Bryophyta</taxon>
        <taxon>Bryophytina</taxon>
        <taxon>Bryopsida</taxon>
        <taxon>Funariidae</taxon>
        <taxon>Funariales</taxon>
        <taxon>Funariaceae</taxon>
        <taxon>Physcomitrium</taxon>
    </lineage>
</organism>
<name>PSBC_PHYPA</name>
<feature type="propeptide" id="PRO_0000431193" evidence="1">
    <location>
        <begin position="1"/>
        <end position="14"/>
    </location>
</feature>
<feature type="chain" id="PRO_0000361470" description="Photosystem II CP43 reaction center protein" evidence="1">
    <location>
        <begin position="15"/>
        <end position="473"/>
    </location>
</feature>
<feature type="transmembrane region" description="Helical" evidence="1">
    <location>
        <begin position="69"/>
        <end position="93"/>
    </location>
</feature>
<feature type="transmembrane region" description="Helical" evidence="1">
    <location>
        <begin position="134"/>
        <end position="155"/>
    </location>
</feature>
<feature type="transmembrane region" description="Helical" evidence="1">
    <location>
        <begin position="178"/>
        <end position="200"/>
    </location>
</feature>
<feature type="transmembrane region" description="Helical" evidence="1">
    <location>
        <begin position="255"/>
        <end position="275"/>
    </location>
</feature>
<feature type="transmembrane region" description="Helical" evidence="1">
    <location>
        <begin position="291"/>
        <end position="312"/>
    </location>
</feature>
<feature type="transmembrane region" description="Helical" evidence="1">
    <location>
        <begin position="447"/>
        <end position="471"/>
    </location>
</feature>
<feature type="binding site" evidence="1">
    <location>
        <position position="367"/>
    </location>
    <ligand>
        <name>[CaMn4O5] cluster</name>
        <dbReference type="ChEBI" id="CHEBI:189552"/>
    </ligand>
</feature>
<feature type="modified residue" description="N-acetylthreonine" evidence="1">
    <location>
        <position position="15"/>
    </location>
</feature>
<feature type="modified residue" description="Phosphothreonine" evidence="1">
    <location>
        <position position="15"/>
    </location>
</feature>
<proteinExistence type="inferred from homology"/>
<dbReference type="EMBL" id="AP005672">
    <property type="protein sequence ID" value="BAC85056.1"/>
    <property type="molecule type" value="Genomic_DNA"/>
</dbReference>
<dbReference type="RefSeq" id="NP_904206.1">
    <property type="nucleotide sequence ID" value="NC_005087.2"/>
</dbReference>
<dbReference type="RefSeq" id="YP_009477536.1">
    <property type="nucleotide sequence ID" value="NC_037465.1"/>
</dbReference>
<dbReference type="SMR" id="Q6YXN9"/>
<dbReference type="FunCoup" id="Q6YXN9">
    <property type="interactions" value="574"/>
</dbReference>
<dbReference type="STRING" id="3218.Q6YXN9"/>
<dbReference type="GeneID" id="2546821"/>
<dbReference type="GeneID" id="36487160"/>
<dbReference type="KEGG" id="ppp:2546821"/>
<dbReference type="InParanoid" id="Q6YXN9"/>
<dbReference type="OrthoDB" id="1854980at2759"/>
<dbReference type="Proteomes" id="UP000006727">
    <property type="component" value="Chloroplast"/>
</dbReference>
<dbReference type="GO" id="GO:0009535">
    <property type="term" value="C:chloroplast thylakoid membrane"/>
    <property type="evidence" value="ECO:0007669"/>
    <property type="project" value="UniProtKB-SubCell"/>
</dbReference>
<dbReference type="GO" id="GO:0009523">
    <property type="term" value="C:photosystem II"/>
    <property type="evidence" value="ECO:0007669"/>
    <property type="project" value="UniProtKB-KW"/>
</dbReference>
<dbReference type="GO" id="GO:0016168">
    <property type="term" value="F:chlorophyll binding"/>
    <property type="evidence" value="ECO:0007669"/>
    <property type="project" value="UniProtKB-UniRule"/>
</dbReference>
<dbReference type="GO" id="GO:0045156">
    <property type="term" value="F:electron transporter, transferring electrons within the cyclic electron transport pathway of photosynthesis activity"/>
    <property type="evidence" value="ECO:0007669"/>
    <property type="project" value="InterPro"/>
</dbReference>
<dbReference type="GO" id="GO:0046872">
    <property type="term" value="F:metal ion binding"/>
    <property type="evidence" value="ECO:0007669"/>
    <property type="project" value="UniProtKB-KW"/>
</dbReference>
<dbReference type="GO" id="GO:0009772">
    <property type="term" value="P:photosynthetic electron transport in photosystem II"/>
    <property type="evidence" value="ECO:0007669"/>
    <property type="project" value="InterPro"/>
</dbReference>
<dbReference type="FunFam" id="1.10.10.670:FF:000001">
    <property type="entry name" value="Photosystem II CP43 reaction center protein"/>
    <property type="match status" value="1"/>
</dbReference>
<dbReference type="Gene3D" id="1.10.10.670">
    <property type="entry name" value="photosystem ii from thermosynechococcus elongatus"/>
    <property type="match status" value="1"/>
</dbReference>
<dbReference type="HAMAP" id="MF_01496">
    <property type="entry name" value="PSII_PsbC_CP43"/>
    <property type="match status" value="1"/>
</dbReference>
<dbReference type="InterPro" id="IPR000932">
    <property type="entry name" value="PS_antenna-like"/>
</dbReference>
<dbReference type="InterPro" id="IPR036001">
    <property type="entry name" value="PS_II_antenna-like_sf"/>
</dbReference>
<dbReference type="InterPro" id="IPR005869">
    <property type="entry name" value="PSII_PsbC"/>
</dbReference>
<dbReference type="InterPro" id="IPR044900">
    <property type="entry name" value="PSII_PsbC_sf"/>
</dbReference>
<dbReference type="NCBIfam" id="TIGR01153">
    <property type="entry name" value="psbC"/>
    <property type="match status" value="1"/>
</dbReference>
<dbReference type="Pfam" id="PF00421">
    <property type="entry name" value="PSII"/>
    <property type="match status" value="1"/>
</dbReference>
<dbReference type="SUPFAM" id="SSF161077">
    <property type="entry name" value="Photosystem II antenna protein-like"/>
    <property type="match status" value="1"/>
</dbReference>
<evidence type="ECO:0000255" key="1">
    <source>
        <dbReference type="HAMAP-Rule" id="MF_01496"/>
    </source>
</evidence>